<sequence length="76" mass="9087">MKKNIILNLIGLRCPEPIMIIRKTIRDMKDNEKILILSDDPATKRDIPNFCYFMEHKLLKNEIKVKPYRYLLKKGL</sequence>
<reference key="1">
    <citation type="journal article" date="2009" name="Science">
        <title>The dynamics and time scale of ongoing genomic erosion in symbiotic bacteria.</title>
        <authorList>
            <person name="Moran N.A."/>
            <person name="McLaughlin H.J."/>
            <person name="Sorek R."/>
        </authorList>
    </citation>
    <scope>NUCLEOTIDE SEQUENCE [LARGE SCALE GENOMIC DNA]</scope>
    <source>
        <strain>5A</strain>
    </source>
</reference>
<keyword id="KW-0963">Cytoplasm</keyword>
<keyword id="KW-0819">tRNA processing</keyword>
<evidence type="ECO:0000255" key="1">
    <source>
        <dbReference type="HAMAP-Rule" id="MF_00413"/>
    </source>
</evidence>
<protein>
    <recommendedName>
        <fullName evidence="1">Sulfur carrier protein TusA</fullName>
    </recommendedName>
    <alternativeName>
        <fullName evidence="1">Sulfur mediator TusA</fullName>
    </alternativeName>
    <alternativeName>
        <fullName evidence="1">Sulfur transfer protein TusA</fullName>
    </alternativeName>
    <alternativeName>
        <fullName evidence="1">tRNA 2-thiouridine synthesizing protein A</fullName>
    </alternativeName>
</protein>
<organism>
    <name type="scientific">Buchnera aphidicola subsp. Acyrthosiphon pisum (strain 5A)</name>
    <dbReference type="NCBI Taxonomy" id="563178"/>
    <lineage>
        <taxon>Bacteria</taxon>
        <taxon>Pseudomonadati</taxon>
        <taxon>Pseudomonadota</taxon>
        <taxon>Gammaproteobacteria</taxon>
        <taxon>Enterobacterales</taxon>
        <taxon>Erwiniaceae</taxon>
        <taxon>Buchnera</taxon>
    </lineage>
</organism>
<gene>
    <name evidence="1" type="primary">tusA</name>
    <name type="ordered locus">BUAP5A_440</name>
</gene>
<feature type="chain" id="PRO_1000199908" description="Sulfur carrier protein TusA">
    <location>
        <begin position="1"/>
        <end position="76"/>
    </location>
</feature>
<feature type="active site" description="Cysteine persulfide intermediate" evidence="1">
    <location>
        <position position="14"/>
    </location>
</feature>
<comment type="function">
    <text evidence="1">Sulfur carrier protein involved in sulfur trafficking in the cell. Part of a sulfur-relay system required for 2-thiolation during synthesis of 2-thiouridine of the modified wobble base 5-methylaminomethyl-2-thiouridine (mnm(5)s(2)U) in tRNA. Interacts with IscS and stimulates its cysteine desulfurase activity. Accepts an activated sulfur from IscS, which is then transferred to TusD, and thus determines the direction of sulfur flow from IscS to 2-thiouridine formation. Also appears to be involved in sulfur transfer for the biosynthesis of molybdopterin.</text>
</comment>
<comment type="pathway">
    <text evidence="1">tRNA modification.</text>
</comment>
<comment type="subunit">
    <text evidence="1">Interacts with IscS.</text>
</comment>
<comment type="subcellular location">
    <subcellularLocation>
        <location evidence="1">Cytoplasm</location>
    </subcellularLocation>
</comment>
<comment type="similarity">
    <text evidence="1">Belongs to the sulfur carrier protein TusA family.</text>
</comment>
<name>TUSA_BUCA5</name>
<accession>B8D9M5</accession>
<dbReference type="EMBL" id="CP001161">
    <property type="protein sequence ID" value="ACL30796.1"/>
    <property type="molecule type" value="Genomic_DNA"/>
</dbReference>
<dbReference type="RefSeq" id="WP_009874401.1">
    <property type="nucleotide sequence ID" value="NC_011833.1"/>
</dbReference>
<dbReference type="SMR" id="B8D9M5"/>
<dbReference type="KEGG" id="bap:BUAP5A_440"/>
<dbReference type="HOGENOM" id="CLU_165255_5_1_6"/>
<dbReference type="OrthoDB" id="9797352at2"/>
<dbReference type="Proteomes" id="UP000006904">
    <property type="component" value="Chromosome"/>
</dbReference>
<dbReference type="GO" id="GO:0005737">
    <property type="term" value="C:cytoplasm"/>
    <property type="evidence" value="ECO:0007669"/>
    <property type="project" value="UniProtKB-SubCell"/>
</dbReference>
<dbReference type="GO" id="GO:0097163">
    <property type="term" value="F:sulfur carrier activity"/>
    <property type="evidence" value="ECO:0007669"/>
    <property type="project" value="UniProtKB-UniRule"/>
</dbReference>
<dbReference type="GO" id="GO:0002143">
    <property type="term" value="P:tRNA wobble position uridine thiolation"/>
    <property type="evidence" value="ECO:0007669"/>
    <property type="project" value="InterPro"/>
</dbReference>
<dbReference type="Gene3D" id="3.30.110.40">
    <property type="entry name" value="TusA-like domain"/>
    <property type="match status" value="1"/>
</dbReference>
<dbReference type="HAMAP" id="MF_00413">
    <property type="entry name" value="Thiourid_synth_A"/>
    <property type="match status" value="1"/>
</dbReference>
<dbReference type="InterPro" id="IPR022931">
    <property type="entry name" value="Sulphur_carrier_TusA"/>
</dbReference>
<dbReference type="InterPro" id="IPR001455">
    <property type="entry name" value="TusA-like"/>
</dbReference>
<dbReference type="InterPro" id="IPR036868">
    <property type="entry name" value="TusA-like_sf"/>
</dbReference>
<dbReference type="NCBIfam" id="NF001423">
    <property type="entry name" value="PRK00299.1"/>
    <property type="match status" value="1"/>
</dbReference>
<dbReference type="PANTHER" id="PTHR33279:SF2">
    <property type="entry name" value="SULFUR CARRIER PROTEIN TUSA"/>
    <property type="match status" value="1"/>
</dbReference>
<dbReference type="PANTHER" id="PTHR33279">
    <property type="entry name" value="SULFUR CARRIER PROTEIN YEDF-RELATED"/>
    <property type="match status" value="1"/>
</dbReference>
<dbReference type="Pfam" id="PF01206">
    <property type="entry name" value="TusA"/>
    <property type="match status" value="1"/>
</dbReference>
<dbReference type="SUPFAM" id="SSF64307">
    <property type="entry name" value="SirA-like"/>
    <property type="match status" value="1"/>
</dbReference>
<dbReference type="PROSITE" id="PS01148">
    <property type="entry name" value="UPF0033"/>
    <property type="match status" value="1"/>
</dbReference>
<proteinExistence type="inferred from homology"/>